<keyword id="KW-0963">Cytoplasm</keyword>
<keyword id="KW-0312">Gluconeogenesis</keyword>
<keyword id="KW-0324">Glycolysis</keyword>
<keyword id="KW-0413">Isomerase</keyword>
<keyword id="KW-1185">Reference proteome</keyword>
<dbReference type="EC" id="5.3.1.1" evidence="1"/>
<dbReference type="EMBL" id="CT978603">
    <property type="protein sequence ID" value="CAK27877.1"/>
    <property type="molecule type" value="Genomic_DNA"/>
</dbReference>
<dbReference type="SMR" id="A5GSL8"/>
<dbReference type="STRING" id="316278.SynRCC307_0974"/>
<dbReference type="KEGG" id="syr:SynRCC307_0974"/>
<dbReference type="eggNOG" id="COG0149">
    <property type="taxonomic scope" value="Bacteria"/>
</dbReference>
<dbReference type="HOGENOM" id="CLU_024251_2_3_3"/>
<dbReference type="OrthoDB" id="9809429at2"/>
<dbReference type="UniPathway" id="UPA00109">
    <property type="reaction ID" value="UER00189"/>
</dbReference>
<dbReference type="UniPathway" id="UPA00138"/>
<dbReference type="Proteomes" id="UP000001115">
    <property type="component" value="Chromosome"/>
</dbReference>
<dbReference type="GO" id="GO:0005829">
    <property type="term" value="C:cytosol"/>
    <property type="evidence" value="ECO:0007669"/>
    <property type="project" value="TreeGrafter"/>
</dbReference>
<dbReference type="GO" id="GO:0004807">
    <property type="term" value="F:triose-phosphate isomerase activity"/>
    <property type="evidence" value="ECO:0007669"/>
    <property type="project" value="UniProtKB-UniRule"/>
</dbReference>
<dbReference type="GO" id="GO:0006094">
    <property type="term" value="P:gluconeogenesis"/>
    <property type="evidence" value="ECO:0007669"/>
    <property type="project" value="UniProtKB-UniRule"/>
</dbReference>
<dbReference type="GO" id="GO:0046166">
    <property type="term" value="P:glyceraldehyde-3-phosphate biosynthetic process"/>
    <property type="evidence" value="ECO:0007669"/>
    <property type="project" value="TreeGrafter"/>
</dbReference>
<dbReference type="GO" id="GO:0019563">
    <property type="term" value="P:glycerol catabolic process"/>
    <property type="evidence" value="ECO:0007669"/>
    <property type="project" value="TreeGrafter"/>
</dbReference>
<dbReference type="GO" id="GO:0006096">
    <property type="term" value="P:glycolytic process"/>
    <property type="evidence" value="ECO:0007669"/>
    <property type="project" value="UniProtKB-UniRule"/>
</dbReference>
<dbReference type="CDD" id="cd00311">
    <property type="entry name" value="TIM"/>
    <property type="match status" value="1"/>
</dbReference>
<dbReference type="FunFam" id="3.20.20.70:FF:000016">
    <property type="entry name" value="Triosephosphate isomerase"/>
    <property type="match status" value="1"/>
</dbReference>
<dbReference type="Gene3D" id="3.20.20.70">
    <property type="entry name" value="Aldolase class I"/>
    <property type="match status" value="1"/>
</dbReference>
<dbReference type="HAMAP" id="MF_00147_B">
    <property type="entry name" value="TIM_B"/>
    <property type="match status" value="1"/>
</dbReference>
<dbReference type="InterPro" id="IPR013785">
    <property type="entry name" value="Aldolase_TIM"/>
</dbReference>
<dbReference type="InterPro" id="IPR035990">
    <property type="entry name" value="TIM_sf"/>
</dbReference>
<dbReference type="InterPro" id="IPR022896">
    <property type="entry name" value="TrioseP_Isoase_bac/euk"/>
</dbReference>
<dbReference type="InterPro" id="IPR000652">
    <property type="entry name" value="Triosephosphate_isomerase"/>
</dbReference>
<dbReference type="InterPro" id="IPR020861">
    <property type="entry name" value="Triosephosphate_isomerase_AS"/>
</dbReference>
<dbReference type="NCBIfam" id="TIGR00419">
    <property type="entry name" value="tim"/>
    <property type="match status" value="1"/>
</dbReference>
<dbReference type="PANTHER" id="PTHR21139">
    <property type="entry name" value="TRIOSEPHOSPHATE ISOMERASE"/>
    <property type="match status" value="1"/>
</dbReference>
<dbReference type="PANTHER" id="PTHR21139:SF42">
    <property type="entry name" value="TRIOSEPHOSPHATE ISOMERASE"/>
    <property type="match status" value="1"/>
</dbReference>
<dbReference type="Pfam" id="PF00121">
    <property type="entry name" value="TIM"/>
    <property type="match status" value="1"/>
</dbReference>
<dbReference type="SUPFAM" id="SSF51351">
    <property type="entry name" value="Triosephosphate isomerase (TIM)"/>
    <property type="match status" value="1"/>
</dbReference>
<dbReference type="PROSITE" id="PS00171">
    <property type="entry name" value="TIM_1"/>
    <property type="match status" value="1"/>
</dbReference>
<dbReference type="PROSITE" id="PS51440">
    <property type="entry name" value="TIM_2"/>
    <property type="match status" value="1"/>
</dbReference>
<feature type="chain" id="PRO_0000307588" description="Triosephosphate isomerase">
    <location>
        <begin position="1"/>
        <end position="253"/>
    </location>
</feature>
<feature type="active site" description="Electrophile" evidence="1">
    <location>
        <position position="100"/>
    </location>
</feature>
<feature type="active site" description="Proton acceptor" evidence="1">
    <location>
        <position position="169"/>
    </location>
</feature>
<feature type="binding site" evidence="1">
    <location>
        <begin position="13"/>
        <end position="15"/>
    </location>
    <ligand>
        <name>substrate</name>
    </ligand>
</feature>
<feature type="binding site" evidence="1">
    <location>
        <position position="175"/>
    </location>
    <ligand>
        <name>substrate</name>
    </ligand>
</feature>
<feature type="binding site" evidence="1">
    <location>
        <position position="208"/>
    </location>
    <ligand>
        <name>substrate</name>
    </ligand>
</feature>
<feature type="binding site" evidence="1">
    <location>
        <begin position="229"/>
        <end position="230"/>
    </location>
    <ligand>
        <name>substrate</name>
    </ligand>
</feature>
<comment type="function">
    <text evidence="1">Involved in the gluconeogenesis. Catalyzes stereospecifically the conversion of dihydroxyacetone phosphate (DHAP) to D-glyceraldehyde-3-phosphate (G3P).</text>
</comment>
<comment type="catalytic activity">
    <reaction evidence="1">
        <text>D-glyceraldehyde 3-phosphate = dihydroxyacetone phosphate</text>
        <dbReference type="Rhea" id="RHEA:18585"/>
        <dbReference type="ChEBI" id="CHEBI:57642"/>
        <dbReference type="ChEBI" id="CHEBI:59776"/>
        <dbReference type="EC" id="5.3.1.1"/>
    </reaction>
</comment>
<comment type="pathway">
    <text evidence="1">Carbohydrate biosynthesis; gluconeogenesis.</text>
</comment>
<comment type="pathway">
    <text evidence="1">Carbohydrate degradation; glycolysis; D-glyceraldehyde 3-phosphate from glycerone phosphate: step 1/1.</text>
</comment>
<comment type="subunit">
    <text evidence="1">Homodimer.</text>
</comment>
<comment type="subcellular location">
    <subcellularLocation>
        <location evidence="1">Cytoplasm</location>
    </subcellularLocation>
</comment>
<comment type="similarity">
    <text evidence="1">Belongs to the triosephosphate isomerase family.</text>
</comment>
<organism>
    <name type="scientific">Synechococcus sp. (strain RCC307)</name>
    <dbReference type="NCBI Taxonomy" id="316278"/>
    <lineage>
        <taxon>Bacteria</taxon>
        <taxon>Bacillati</taxon>
        <taxon>Cyanobacteriota</taxon>
        <taxon>Cyanophyceae</taxon>
        <taxon>Synechococcales</taxon>
        <taxon>Synechococcaceae</taxon>
        <taxon>Synechococcus</taxon>
    </lineage>
</organism>
<evidence type="ECO:0000255" key="1">
    <source>
        <dbReference type="HAMAP-Rule" id="MF_00147"/>
    </source>
</evidence>
<gene>
    <name evidence="1" type="primary">tpiA</name>
    <name type="ordered locus">SynRCC307_0974</name>
</gene>
<sequence length="253" mass="27144">MSTQSRPVVIAGNWKMHMTCAQAKQYAAAFLPQVANAPKDRSIVLAPPFTAISTLQEALAGSDVQIASQNVHWKDSGAFTGEISAEMLLELGVGYTIVGHSEPRKYFSESDEQINQRARASQAAGLIPILCVGESDEQRSSNETERVIRRQVEQGLEGIDPSKLVVAYEPIWAIGTGKTCESEEANRVCGLIRNWVGYPNLTIQYGGSVKPGNIDELMAKSDIDGVLVGGASLEPDSFARIANYQMASAAAAA</sequence>
<proteinExistence type="inferred from homology"/>
<protein>
    <recommendedName>
        <fullName evidence="1">Triosephosphate isomerase</fullName>
        <shortName evidence="1">TIM</shortName>
        <shortName evidence="1">TPI</shortName>
        <ecNumber evidence="1">5.3.1.1</ecNumber>
    </recommendedName>
    <alternativeName>
        <fullName evidence="1">Triose-phosphate isomerase</fullName>
    </alternativeName>
</protein>
<reference key="1">
    <citation type="submission" date="2006-05" db="EMBL/GenBank/DDBJ databases">
        <authorList>
            <consortium name="Genoscope"/>
        </authorList>
    </citation>
    <scope>NUCLEOTIDE SEQUENCE [LARGE SCALE GENOMIC DNA]</scope>
    <source>
        <strain>RCC307</strain>
    </source>
</reference>
<accession>A5GSL8</accession>
<name>TPIS_SYNR3</name>